<gene>
    <name evidence="1" type="primary">clpP</name>
    <name type="ordered locus">SAOUHSC_00790</name>
</gene>
<name>CLPP_STAA8</name>
<sequence>MNLIPTVIETTNRGERAYDIYSRLLKDRIIMLGSQIDDNVANSIVSQLLFLQAQDSEKDIYLYINSPGGSVTAGFAIYDTIQHIKPDVQTICIGMAASMGSFLLAAGAKGKRFALPNAEVMIHQPLGGAQGQATEIEIAANHILKTREKLNRILSERTGQSIEKIQKDTDRDNFLTAEEAKEYGLIDEVMVPETK</sequence>
<dbReference type="EC" id="3.4.21.92" evidence="1"/>
<dbReference type="EMBL" id="CP000253">
    <property type="protein sequence ID" value="ABD29919.1"/>
    <property type="molecule type" value="Genomic_DNA"/>
</dbReference>
<dbReference type="RefSeq" id="WP_001049165.1">
    <property type="nucleotide sequence ID" value="NZ_LS483365.1"/>
</dbReference>
<dbReference type="RefSeq" id="YP_499347.1">
    <property type="nucleotide sequence ID" value="NC_007795.1"/>
</dbReference>
<dbReference type="PDB" id="3QWD">
    <property type="method" value="X-ray"/>
    <property type="resolution" value="2.10 A"/>
    <property type="chains" value="A/B/C/D/E/F/G/H/I/J/K/L/M/N=1-195"/>
</dbReference>
<dbReference type="PDB" id="3V5E">
    <property type="method" value="X-ray"/>
    <property type="resolution" value="2.30 A"/>
    <property type="chains" value="A/B/C/D/E/F/G/H/I/J/K/L/M/N=1-195"/>
</dbReference>
<dbReference type="PDB" id="3V5I">
    <property type="method" value="X-ray"/>
    <property type="resolution" value="2.80 A"/>
    <property type="chains" value="A/B/C/D/E/F/G/H/I/J/K/L/M/N/O/P/Q/R/S/T/U/V/W/X/Y/Z/a/b=1-195"/>
</dbReference>
<dbReference type="PDB" id="4MXI">
    <property type="method" value="X-ray"/>
    <property type="resolution" value="2.30 A"/>
    <property type="chains" value="A/B/C/D/E/F/G=1-195"/>
</dbReference>
<dbReference type="PDB" id="5C90">
    <property type="method" value="X-ray"/>
    <property type="resolution" value="1.75 A"/>
    <property type="chains" value="A/B/C/D/E/F/G/H/I/J/K/L/M/N=1-195"/>
</dbReference>
<dbReference type="PDB" id="5VZ2">
    <property type="method" value="X-ray"/>
    <property type="resolution" value="2.26 A"/>
    <property type="chains" value="A/B/C/D/E/F/G/I/K/L/M/N/S/T=1-195"/>
</dbReference>
<dbReference type="PDB" id="5W18">
    <property type="method" value="X-ray"/>
    <property type="resolution" value="2.44 A"/>
    <property type="chains" value="A/B/C/D/E/F/G/I/K/L/M/N/S/T=1-195"/>
</dbReference>
<dbReference type="PDB" id="6DKF">
    <property type="method" value="EM"/>
    <property type="resolution" value="3.70 A"/>
    <property type="chains" value="A/B/C/D/E/F/G/H/I/J/K/L/M/N=1-195"/>
</dbReference>
<dbReference type="PDB" id="6L3X">
    <property type="method" value="X-ray"/>
    <property type="resolution" value="2.31 A"/>
    <property type="chains" value="A/B/C/D/E/F/G/H/I/J/K/L/M/N=19-195"/>
</dbReference>
<dbReference type="PDB" id="6L40">
    <property type="method" value="X-ray"/>
    <property type="resolution" value="2.21 A"/>
    <property type="chains" value="A/B/C/D/E/F/G/H/I/J/K/L/M/N=19-193"/>
</dbReference>
<dbReference type="PDB" id="6N80">
    <property type="method" value="X-ray"/>
    <property type="resolution" value="1.96 A"/>
    <property type="chains" value="A/B/C/D/E/F/G/I/K/L/M/N/S/T=1-195"/>
</dbReference>
<dbReference type="PDB" id="6PKA">
    <property type="method" value="X-ray"/>
    <property type="resolution" value="2.25 A"/>
    <property type="chains" value="A/B/C/D/E/F/G/I/K/L/M/N/S/T=1-195"/>
</dbReference>
<dbReference type="PDB" id="6PMD">
    <property type="method" value="X-ray"/>
    <property type="resolution" value="2.21 A"/>
    <property type="chains" value="A/B/C/D/E/F/G/I/K/L/M/N/S/T=1-195"/>
</dbReference>
<dbReference type="PDB" id="6TTY">
    <property type="method" value="X-ray"/>
    <property type="resolution" value="1.90 A"/>
    <property type="chains" value="A/B/C/D/E/F/G/H/I/J/K/L/M/N=1-195"/>
</dbReference>
<dbReference type="PDB" id="6TTZ">
    <property type="method" value="X-ray"/>
    <property type="resolution" value="2.20 A"/>
    <property type="chains" value="A/B/C/D/E/F/G=1-195"/>
</dbReference>
<dbReference type="PDB" id="7WGS">
    <property type="method" value="X-ray"/>
    <property type="resolution" value="2.11 A"/>
    <property type="chains" value="A/B/C/D/E/F/G/H/I/J/K/L/M/N=1-195"/>
</dbReference>
<dbReference type="PDB" id="7WID">
    <property type="method" value="X-ray"/>
    <property type="resolution" value="1.90 A"/>
    <property type="chains" value="A/B/C/D/E/F/G/H/I/J/K/L/M/N=1-195"/>
</dbReference>
<dbReference type="PDB" id="7XBZ">
    <property type="method" value="X-ray"/>
    <property type="resolution" value="2.15 A"/>
    <property type="chains" value="A/B/C/D/E/F/G/H/I/J/K/L/M/N=1-195"/>
</dbReference>
<dbReference type="PDB" id="8E71">
    <property type="method" value="X-ray"/>
    <property type="resolution" value="1.57 A"/>
    <property type="chains" value="A/B/C/D/E/F/G/I/K/L/M/N/S/T=1-195"/>
</dbReference>
<dbReference type="PDB" id="8E7P">
    <property type="method" value="X-ray"/>
    <property type="resolution" value="1.68 A"/>
    <property type="chains" value="A/B/C/D/E/F/G/I/K/L/M/N/S/T=1-195"/>
</dbReference>
<dbReference type="PDB" id="8EF8">
    <property type="method" value="X-ray"/>
    <property type="resolution" value="2.17 A"/>
    <property type="chains" value="A/B/C/D/E/F/G/I/K/L/M/N/S/T=1-195"/>
</dbReference>
<dbReference type="PDB" id="8R03">
    <property type="method" value="X-ray"/>
    <property type="resolution" value="2.00 A"/>
    <property type="chains" value="A/B/C/D/E/F/G/H/I/J/K/L/M/N=2-195"/>
</dbReference>
<dbReference type="PDB" id="9IRM">
    <property type="method" value="X-ray"/>
    <property type="resolution" value="1.81 A"/>
    <property type="chains" value="A/B/C/D/E/F/G/H/I/J/K/L/M/N=1-195"/>
</dbReference>
<dbReference type="PDB" id="9IRP">
    <property type="method" value="X-ray"/>
    <property type="resolution" value="1.90 A"/>
    <property type="chains" value="A/B/C/D/E/F/G/H/I/J/K/L/M/N=1-195"/>
</dbReference>
<dbReference type="PDBsum" id="3QWD"/>
<dbReference type="PDBsum" id="3V5E"/>
<dbReference type="PDBsum" id="3V5I"/>
<dbReference type="PDBsum" id="4MXI"/>
<dbReference type="PDBsum" id="5C90"/>
<dbReference type="PDBsum" id="5VZ2"/>
<dbReference type="PDBsum" id="5W18"/>
<dbReference type="PDBsum" id="6DKF"/>
<dbReference type="PDBsum" id="6L3X"/>
<dbReference type="PDBsum" id="6L40"/>
<dbReference type="PDBsum" id="6N80"/>
<dbReference type="PDBsum" id="6PKA"/>
<dbReference type="PDBsum" id="6PMD"/>
<dbReference type="PDBsum" id="6TTY"/>
<dbReference type="PDBsum" id="6TTZ"/>
<dbReference type="PDBsum" id="7WGS"/>
<dbReference type="PDBsum" id="7WID"/>
<dbReference type="PDBsum" id="7XBZ"/>
<dbReference type="PDBsum" id="8E71"/>
<dbReference type="PDBsum" id="8E7P"/>
<dbReference type="PDBsum" id="8EF8"/>
<dbReference type="PDBsum" id="8R03"/>
<dbReference type="PDBsum" id="9IRM"/>
<dbReference type="PDBsum" id="9IRP"/>
<dbReference type="SMR" id="Q2G036"/>
<dbReference type="STRING" id="93061.SAOUHSC_00790"/>
<dbReference type="BindingDB" id="Q2G036"/>
<dbReference type="ChEMBL" id="CHEMBL1932910"/>
<dbReference type="DrugCentral" id="Q2G036"/>
<dbReference type="MEROPS" id="S14.001"/>
<dbReference type="PaxDb" id="1280-SAXN108_0836"/>
<dbReference type="GeneID" id="3919354"/>
<dbReference type="GeneID" id="98345115"/>
<dbReference type="KEGG" id="sao:SAOUHSC_00790"/>
<dbReference type="PATRIC" id="fig|93061.5.peg.713"/>
<dbReference type="eggNOG" id="COG0740">
    <property type="taxonomic scope" value="Bacteria"/>
</dbReference>
<dbReference type="HOGENOM" id="CLU_058707_3_2_9"/>
<dbReference type="OrthoDB" id="9802800at2"/>
<dbReference type="BRENDA" id="3.4.21.92">
    <property type="organism ID" value="3352"/>
</dbReference>
<dbReference type="EvolutionaryTrace" id="Q2G036"/>
<dbReference type="PRO" id="PR:Q2G036"/>
<dbReference type="Proteomes" id="UP000008816">
    <property type="component" value="Chromosome"/>
</dbReference>
<dbReference type="GO" id="GO:0005737">
    <property type="term" value="C:cytoplasm"/>
    <property type="evidence" value="ECO:0007669"/>
    <property type="project" value="UniProtKB-SubCell"/>
</dbReference>
<dbReference type="GO" id="GO:0009368">
    <property type="term" value="C:endopeptidase Clp complex"/>
    <property type="evidence" value="ECO:0000318"/>
    <property type="project" value="GO_Central"/>
</dbReference>
<dbReference type="GO" id="GO:0004176">
    <property type="term" value="F:ATP-dependent peptidase activity"/>
    <property type="evidence" value="ECO:0000318"/>
    <property type="project" value="GO_Central"/>
</dbReference>
<dbReference type="GO" id="GO:0051117">
    <property type="term" value="F:ATPase binding"/>
    <property type="evidence" value="ECO:0000318"/>
    <property type="project" value="GO_Central"/>
</dbReference>
<dbReference type="GO" id="GO:0004252">
    <property type="term" value="F:serine-type endopeptidase activity"/>
    <property type="evidence" value="ECO:0000318"/>
    <property type="project" value="GO_Central"/>
</dbReference>
<dbReference type="GO" id="GO:0006515">
    <property type="term" value="P:protein quality control for misfolded or incompletely synthesized proteins"/>
    <property type="evidence" value="ECO:0000318"/>
    <property type="project" value="GO_Central"/>
</dbReference>
<dbReference type="CDD" id="cd07017">
    <property type="entry name" value="S14_ClpP_2"/>
    <property type="match status" value="1"/>
</dbReference>
<dbReference type="FunFam" id="3.90.226.10:FF:000001">
    <property type="entry name" value="ATP-dependent Clp protease proteolytic subunit"/>
    <property type="match status" value="1"/>
</dbReference>
<dbReference type="Gene3D" id="3.90.226.10">
    <property type="entry name" value="2-enoyl-CoA Hydratase, Chain A, domain 1"/>
    <property type="match status" value="1"/>
</dbReference>
<dbReference type="HAMAP" id="MF_00444">
    <property type="entry name" value="ClpP"/>
    <property type="match status" value="1"/>
</dbReference>
<dbReference type="InterPro" id="IPR001907">
    <property type="entry name" value="ClpP"/>
</dbReference>
<dbReference type="InterPro" id="IPR029045">
    <property type="entry name" value="ClpP/crotonase-like_dom_sf"/>
</dbReference>
<dbReference type="InterPro" id="IPR023562">
    <property type="entry name" value="ClpP/TepA"/>
</dbReference>
<dbReference type="InterPro" id="IPR033135">
    <property type="entry name" value="ClpP_His_AS"/>
</dbReference>
<dbReference type="InterPro" id="IPR018215">
    <property type="entry name" value="ClpP_Ser_AS"/>
</dbReference>
<dbReference type="NCBIfam" id="TIGR00493">
    <property type="entry name" value="clpP"/>
    <property type="match status" value="1"/>
</dbReference>
<dbReference type="NCBIfam" id="NF001368">
    <property type="entry name" value="PRK00277.1"/>
    <property type="match status" value="1"/>
</dbReference>
<dbReference type="NCBIfam" id="NF009205">
    <property type="entry name" value="PRK12553.1"/>
    <property type="match status" value="1"/>
</dbReference>
<dbReference type="PANTHER" id="PTHR10381">
    <property type="entry name" value="ATP-DEPENDENT CLP PROTEASE PROTEOLYTIC SUBUNIT"/>
    <property type="match status" value="1"/>
</dbReference>
<dbReference type="PANTHER" id="PTHR10381:SF70">
    <property type="entry name" value="ATP-DEPENDENT CLP PROTEASE PROTEOLYTIC SUBUNIT"/>
    <property type="match status" value="1"/>
</dbReference>
<dbReference type="Pfam" id="PF00574">
    <property type="entry name" value="CLP_protease"/>
    <property type="match status" value="1"/>
</dbReference>
<dbReference type="PRINTS" id="PR00127">
    <property type="entry name" value="CLPPROTEASEP"/>
</dbReference>
<dbReference type="SUPFAM" id="SSF52096">
    <property type="entry name" value="ClpP/crotonase"/>
    <property type="match status" value="1"/>
</dbReference>
<dbReference type="PROSITE" id="PS00382">
    <property type="entry name" value="CLP_PROTEASE_HIS"/>
    <property type="match status" value="1"/>
</dbReference>
<dbReference type="PROSITE" id="PS00381">
    <property type="entry name" value="CLP_PROTEASE_SER"/>
    <property type="match status" value="1"/>
</dbReference>
<feature type="chain" id="PRO_0000252851" description="ATP-dependent Clp protease proteolytic subunit">
    <location>
        <begin position="1"/>
        <end position="195"/>
    </location>
</feature>
<feature type="active site" description="Nucleophile" evidence="1">
    <location>
        <position position="98"/>
    </location>
</feature>
<feature type="active site" evidence="1">
    <location>
        <position position="123"/>
    </location>
</feature>
<feature type="strand" evidence="2">
    <location>
        <begin position="6"/>
        <end position="8"/>
    </location>
</feature>
<feature type="strand" evidence="2">
    <location>
        <begin position="17"/>
        <end position="19"/>
    </location>
</feature>
<feature type="helix" evidence="2">
    <location>
        <begin position="20"/>
        <end position="26"/>
    </location>
</feature>
<feature type="strand" evidence="2">
    <location>
        <begin position="29"/>
        <end position="32"/>
    </location>
</feature>
<feature type="helix" evidence="2">
    <location>
        <begin position="38"/>
        <end position="54"/>
    </location>
</feature>
<feature type="strand" evidence="2">
    <location>
        <begin position="56"/>
        <end position="58"/>
    </location>
</feature>
<feature type="strand" evidence="2">
    <location>
        <begin position="60"/>
        <end position="66"/>
    </location>
</feature>
<feature type="helix" evidence="2">
    <location>
        <begin position="71"/>
        <end position="83"/>
    </location>
</feature>
<feature type="strand" evidence="2">
    <location>
        <begin position="84"/>
        <end position="86"/>
    </location>
</feature>
<feature type="strand" evidence="2">
    <location>
        <begin position="88"/>
        <end position="97"/>
    </location>
</feature>
<feature type="helix" evidence="2">
    <location>
        <begin position="99"/>
        <end position="105"/>
    </location>
</feature>
<feature type="strand" evidence="2">
    <location>
        <begin position="112"/>
        <end position="114"/>
    </location>
</feature>
<feature type="strand" evidence="2">
    <location>
        <begin position="119"/>
        <end position="122"/>
    </location>
</feature>
<feature type="strand" evidence="2">
    <location>
        <begin position="126"/>
        <end position="132"/>
    </location>
</feature>
<feature type="helix" evidence="2">
    <location>
        <begin position="133"/>
        <end position="158"/>
    </location>
</feature>
<feature type="helix" evidence="2">
    <location>
        <begin position="162"/>
        <end position="168"/>
    </location>
</feature>
<feature type="strand" evidence="2">
    <location>
        <begin position="173"/>
        <end position="176"/>
    </location>
</feature>
<feature type="helix" evidence="2">
    <location>
        <begin position="177"/>
        <end position="182"/>
    </location>
</feature>
<feature type="strand" evidence="2">
    <location>
        <begin position="187"/>
        <end position="189"/>
    </location>
</feature>
<comment type="function">
    <text evidence="1">Cleaves peptides in various proteins in a process that requires ATP hydrolysis. Has a chymotrypsin-like activity. Plays a major role in the degradation of misfolded proteins.</text>
</comment>
<comment type="catalytic activity">
    <reaction evidence="1">
        <text>Hydrolysis of proteins to small peptides in the presence of ATP and magnesium. alpha-casein is the usual test substrate. In the absence of ATP, only oligopeptides shorter than five residues are hydrolyzed (such as succinyl-Leu-Tyr-|-NHMec, and Leu-Tyr-Leu-|-Tyr-Trp, in which cleavage of the -Tyr-|-Leu- and -Tyr-|-Trp bonds also occurs).</text>
        <dbReference type="EC" id="3.4.21.92"/>
    </reaction>
</comment>
<comment type="subunit">
    <text evidence="1">Fourteen ClpP subunits assemble into 2 heptameric rings which stack back to back to give a disk-like structure with a central cavity, resembling the structure of eukaryotic proteasomes.</text>
</comment>
<comment type="subcellular location">
    <subcellularLocation>
        <location evidence="1">Cytoplasm</location>
    </subcellularLocation>
</comment>
<comment type="similarity">
    <text evidence="1">Belongs to the peptidase S14 family.</text>
</comment>
<protein>
    <recommendedName>
        <fullName evidence="1">ATP-dependent Clp protease proteolytic subunit</fullName>
        <ecNumber evidence="1">3.4.21.92</ecNumber>
    </recommendedName>
    <alternativeName>
        <fullName evidence="1">Endopeptidase Clp</fullName>
    </alternativeName>
</protein>
<keyword id="KW-0002">3D-structure</keyword>
<keyword id="KW-0963">Cytoplasm</keyword>
<keyword id="KW-0378">Hydrolase</keyword>
<keyword id="KW-0645">Protease</keyword>
<keyword id="KW-1185">Reference proteome</keyword>
<keyword id="KW-0720">Serine protease</keyword>
<accession>Q2G036</accession>
<evidence type="ECO:0000255" key="1">
    <source>
        <dbReference type="HAMAP-Rule" id="MF_00444"/>
    </source>
</evidence>
<evidence type="ECO:0007829" key="2">
    <source>
        <dbReference type="PDB" id="8E71"/>
    </source>
</evidence>
<organism>
    <name type="scientific">Staphylococcus aureus (strain NCTC 8325 / PS 47)</name>
    <dbReference type="NCBI Taxonomy" id="93061"/>
    <lineage>
        <taxon>Bacteria</taxon>
        <taxon>Bacillati</taxon>
        <taxon>Bacillota</taxon>
        <taxon>Bacilli</taxon>
        <taxon>Bacillales</taxon>
        <taxon>Staphylococcaceae</taxon>
        <taxon>Staphylococcus</taxon>
    </lineage>
</organism>
<proteinExistence type="evidence at protein level"/>
<reference key="1">
    <citation type="book" date="2006" name="Gram positive pathogens, 2nd edition">
        <title>The Staphylococcus aureus NCTC 8325 genome.</title>
        <editorList>
            <person name="Fischetti V."/>
            <person name="Novick R."/>
            <person name="Ferretti J."/>
            <person name="Portnoy D."/>
            <person name="Rood J."/>
        </editorList>
        <authorList>
            <person name="Gillaspy A.F."/>
            <person name="Worrell V."/>
            <person name="Orvis J."/>
            <person name="Roe B.A."/>
            <person name="Dyer D.W."/>
            <person name="Iandolo J.J."/>
        </authorList>
    </citation>
    <scope>NUCLEOTIDE SEQUENCE [LARGE SCALE GENOMIC DNA]</scope>
    <source>
        <strain>NCTC 8325 / PS 47</strain>
    </source>
</reference>